<keyword id="KW-0963">Cytoplasm</keyword>
<keyword id="KW-0489">Methyltransferase</keyword>
<keyword id="KW-0545">Nucleotide biosynthesis</keyword>
<keyword id="KW-0808">Transferase</keyword>
<evidence type="ECO:0000255" key="1">
    <source>
        <dbReference type="HAMAP-Rule" id="MF_00008"/>
    </source>
</evidence>
<dbReference type="EC" id="2.1.1.45" evidence="1"/>
<dbReference type="EMBL" id="CP000764">
    <property type="protein sequence ID" value="ABS21948.1"/>
    <property type="molecule type" value="Genomic_DNA"/>
</dbReference>
<dbReference type="RefSeq" id="WP_012094124.1">
    <property type="nucleotide sequence ID" value="NC_009674.1"/>
</dbReference>
<dbReference type="SMR" id="A7GP90"/>
<dbReference type="STRING" id="315749.Bcer98_1639"/>
<dbReference type="GeneID" id="33896970"/>
<dbReference type="KEGG" id="bcy:Bcer98_1639"/>
<dbReference type="eggNOG" id="COG0207">
    <property type="taxonomic scope" value="Bacteria"/>
</dbReference>
<dbReference type="HOGENOM" id="CLU_021669_0_2_9"/>
<dbReference type="OrthoDB" id="9774633at2"/>
<dbReference type="UniPathway" id="UPA00575"/>
<dbReference type="Proteomes" id="UP000002300">
    <property type="component" value="Chromosome"/>
</dbReference>
<dbReference type="GO" id="GO:0005829">
    <property type="term" value="C:cytosol"/>
    <property type="evidence" value="ECO:0007669"/>
    <property type="project" value="TreeGrafter"/>
</dbReference>
<dbReference type="GO" id="GO:0004799">
    <property type="term" value="F:thymidylate synthase activity"/>
    <property type="evidence" value="ECO:0007669"/>
    <property type="project" value="UniProtKB-UniRule"/>
</dbReference>
<dbReference type="GO" id="GO:0006231">
    <property type="term" value="P:dTMP biosynthetic process"/>
    <property type="evidence" value="ECO:0007669"/>
    <property type="project" value="UniProtKB-UniRule"/>
</dbReference>
<dbReference type="GO" id="GO:0006235">
    <property type="term" value="P:dTTP biosynthetic process"/>
    <property type="evidence" value="ECO:0007669"/>
    <property type="project" value="UniProtKB-UniRule"/>
</dbReference>
<dbReference type="GO" id="GO:0032259">
    <property type="term" value="P:methylation"/>
    <property type="evidence" value="ECO:0007669"/>
    <property type="project" value="UniProtKB-KW"/>
</dbReference>
<dbReference type="CDD" id="cd00351">
    <property type="entry name" value="TS_Pyrimidine_HMase"/>
    <property type="match status" value="1"/>
</dbReference>
<dbReference type="Gene3D" id="3.30.572.10">
    <property type="entry name" value="Thymidylate synthase/dCMP hydroxymethylase domain"/>
    <property type="match status" value="1"/>
</dbReference>
<dbReference type="HAMAP" id="MF_00008">
    <property type="entry name" value="Thymidy_synth_bact"/>
    <property type="match status" value="1"/>
</dbReference>
<dbReference type="InterPro" id="IPR045097">
    <property type="entry name" value="Thymidate_synth/dCMP_Mease"/>
</dbReference>
<dbReference type="InterPro" id="IPR023451">
    <property type="entry name" value="Thymidate_synth/dCMP_Mease_dom"/>
</dbReference>
<dbReference type="InterPro" id="IPR036926">
    <property type="entry name" value="Thymidate_synth/dCMP_Mease_sf"/>
</dbReference>
<dbReference type="InterPro" id="IPR000398">
    <property type="entry name" value="Thymidylate_synthase"/>
</dbReference>
<dbReference type="InterPro" id="IPR020940">
    <property type="entry name" value="Thymidylate_synthase_AS"/>
</dbReference>
<dbReference type="NCBIfam" id="NF002496">
    <property type="entry name" value="PRK01827.1-2"/>
    <property type="match status" value="1"/>
</dbReference>
<dbReference type="NCBIfam" id="TIGR03284">
    <property type="entry name" value="thym_sym"/>
    <property type="match status" value="1"/>
</dbReference>
<dbReference type="PANTHER" id="PTHR11548:SF9">
    <property type="entry name" value="THYMIDYLATE SYNTHASE"/>
    <property type="match status" value="1"/>
</dbReference>
<dbReference type="PANTHER" id="PTHR11548">
    <property type="entry name" value="THYMIDYLATE SYNTHASE 1"/>
    <property type="match status" value="1"/>
</dbReference>
<dbReference type="Pfam" id="PF00303">
    <property type="entry name" value="Thymidylat_synt"/>
    <property type="match status" value="1"/>
</dbReference>
<dbReference type="PRINTS" id="PR00108">
    <property type="entry name" value="THYMDSNTHASE"/>
</dbReference>
<dbReference type="SUPFAM" id="SSF55831">
    <property type="entry name" value="Thymidylate synthase/dCMP hydroxymethylase"/>
    <property type="match status" value="1"/>
</dbReference>
<dbReference type="PROSITE" id="PS00091">
    <property type="entry name" value="THYMIDYLATE_SYNTHASE"/>
    <property type="match status" value="1"/>
</dbReference>
<reference key="1">
    <citation type="journal article" date="2008" name="Chem. Biol. Interact.">
        <title>Extending the Bacillus cereus group genomics to putative food-borne pathogens of different toxicity.</title>
        <authorList>
            <person name="Lapidus A."/>
            <person name="Goltsman E."/>
            <person name="Auger S."/>
            <person name="Galleron N."/>
            <person name="Segurens B."/>
            <person name="Dossat C."/>
            <person name="Land M.L."/>
            <person name="Broussolle V."/>
            <person name="Brillard J."/>
            <person name="Guinebretiere M.-H."/>
            <person name="Sanchis V."/>
            <person name="Nguen-the C."/>
            <person name="Lereclus D."/>
            <person name="Richardson P."/>
            <person name="Wincker P."/>
            <person name="Weissenbach J."/>
            <person name="Ehrlich S.D."/>
            <person name="Sorokin A."/>
        </authorList>
    </citation>
    <scope>NUCLEOTIDE SEQUENCE [LARGE SCALE GENOMIC DNA]</scope>
    <source>
        <strain>DSM 22905 / CIP 110041 / 391-98 / NVH 391-98</strain>
    </source>
</reference>
<comment type="function">
    <text evidence="1">Catalyzes the reductive methylation of 2'-deoxyuridine-5'-monophosphate (dUMP) to 2'-deoxythymidine-5'-monophosphate (dTMP) while utilizing 5,10-methylenetetrahydrofolate (mTHF) as the methyl donor and reductant in the reaction, yielding dihydrofolate (DHF) as a by-product. This enzymatic reaction provides an intracellular de novo source of dTMP, an essential precursor for DNA biosynthesis.</text>
</comment>
<comment type="catalytic activity">
    <reaction evidence="1">
        <text>dUMP + (6R)-5,10-methylene-5,6,7,8-tetrahydrofolate = 7,8-dihydrofolate + dTMP</text>
        <dbReference type="Rhea" id="RHEA:12104"/>
        <dbReference type="ChEBI" id="CHEBI:15636"/>
        <dbReference type="ChEBI" id="CHEBI:57451"/>
        <dbReference type="ChEBI" id="CHEBI:63528"/>
        <dbReference type="ChEBI" id="CHEBI:246422"/>
        <dbReference type="EC" id="2.1.1.45"/>
    </reaction>
</comment>
<comment type="pathway">
    <text evidence="1">Pyrimidine metabolism; dTTP biosynthesis.</text>
</comment>
<comment type="subunit">
    <text evidence="1">Homodimer.</text>
</comment>
<comment type="subcellular location">
    <subcellularLocation>
        <location evidence="1">Cytoplasm</location>
    </subcellularLocation>
</comment>
<comment type="similarity">
    <text evidence="1">Belongs to the thymidylate synthase family. Bacterial-type ThyA subfamily.</text>
</comment>
<organism>
    <name type="scientific">Bacillus cytotoxicus (strain DSM 22905 / CIP 110041 / 391-98 / NVH 391-98)</name>
    <dbReference type="NCBI Taxonomy" id="315749"/>
    <lineage>
        <taxon>Bacteria</taxon>
        <taxon>Bacillati</taxon>
        <taxon>Bacillota</taxon>
        <taxon>Bacilli</taxon>
        <taxon>Bacillales</taxon>
        <taxon>Bacillaceae</taxon>
        <taxon>Bacillus</taxon>
        <taxon>Bacillus cereus group</taxon>
    </lineage>
</organism>
<accession>A7GP90</accession>
<sequence length="318" mass="36810">MKHAEYEYLNLCRHVMEHGTKKEDRTGTGTVSVFGYQMRFDLSKGFPLLTTKRVPFRLVASELLWFMKGDTNIRYLLQHNNNIWNEWAFKNWVESDEYKGPDMTNFGLRSQEDEAFKTQYDEQMEIFKKNVLEDDEFARKYGYLGDVYGKQWRAWKTAAGETIDQLKDVIEMIKKTPDSRRLIVSAWNPEDVPNMALPPCHTLFQFYVADGKLSCQLYQRSGDIFLGIPFNIASYSLLTHLIAHECGLAVGEFVHTIGDAHIYTNHFEQVKKQLAREPRPFPTLKLNSDVKSVFDFEMGDLTIEGYDPHPAIKAPVAV</sequence>
<gene>
    <name evidence="1" type="primary">thyA</name>
    <name type="ordered locus">Bcer98_1639</name>
</gene>
<feature type="chain" id="PRO_1000073867" description="Thymidylate synthase">
    <location>
        <begin position="1"/>
        <end position="318"/>
    </location>
</feature>
<feature type="active site" description="Nucleophile" evidence="1">
    <location>
        <position position="200"/>
    </location>
</feature>
<feature type="binding site" description="in other chain" evidence="1">
    <location>
        <position position="25"/>
    </location>
    <ligand>
        <name>dUMP</name>
        <dbReference type="ChEBI" id="CHEBI:246422"/>
        <note>ligand shared between dimeric partners</note>
    </ligand>
</feature>
<feature type="binding site" evidence="1">
    <location>
        <begin position="180"/>
        <end position="181"/>
    </location>
    <ligand>
        <name>dUMP</name>
        <dbReference type="ChEBI" id="CHEBI:246422"/>
        <note>ligand shared between dimeric partners</note>
    </ligand>
</feature>
<feature type="binding site" description="in other chain" evidence="1">
    <location>
        <begin position="220"/>
        <end position="223"/>
    </location>
    <ligand>
        <name>dUMP</name>
        <dbReference type="ChEBI" id="CHEBI:246422"/>
        <note>ligand shared between dimeric partners</note>
    </ligand>
</feature>
<feature type="binding site" evidence="1">
    <location>
        <position position="223"/>
    </location>
    <ligand>
        <name>(6R)-5,10-methylene-5,6,7,8-tetrahydrofolate</name>
        <dbReference type="ChEBI" id="CHEBI:15636"/>
    </ligand>
</feature>
<feature type="binding site" description="in other chain" evidence="1">
    <location>
        <position position="231"/>
    </location>
    <ligand>
        <name>dUMP</name>
        <dbReference type="ChEBI" id="CHEBI:246422"/>
        <note>ligand shared between dimeric partners</note>
    </ligand>
</feature>
<feature type="binding site" description="in other chain" evidence="1">
    <location>
        <begin position="261"/>
        <end position="263"/>
    </location>
    <ligand>
        <name>dUMP</name>
        <dbReference type="ChEBI" id="CHEBI:246422"/>
        <note>ligand shared between dimeric partners</note>
    </ligand>
</feature>
<feature type="binding site" evidence="1">
    <location>
        <position position="317"/>
    </location>
    <ligand>
        <name>(6R)-5,10-methylene-5,6,7,8-tetrahydrofolate</name>
        <dbReference type="ChEBI" id="CHEBI:15636"/>
    </ligand>
</feature>
<name>TYSY_BACCN</name>
<protein>
    <recommendedName>
        <fullName evidence="1">Thymidylate synthase</fullName>
        <shortName evidence="1">TS</shortName>
        <shortName evidence="1">TSase</shortName>
        <ecNumber evidence="1">2.1.1.45</ecNumber>
    </recommendedName>
</protein>
<proteinExistence type="inferred from homology"/>